<feature type="chain" id="PRO_0000433507" description="Collagen alpha-2(I) chain" evidence="3">
    <location>
        <begin position="1"/>
        <end position="908"/>
    </location>
</feature>
<feature type="region of interest" description="Disordered" evidence="2">
    <location>
        <begin position="1"/>
        <end position="211"/>
    </location>
</feature>
<feature type="region of interest" description="Disordered" evidence="2">
    <location>
        <begin position="227"/>
        <end position="908"/>
    </location>
</feature>
<feature type="compositionally biased region" description="Low complexity" evidence="2">
    <location>
        <begin position="1"/>
        <end position="36"/>
    </location>
</feature>
<feature type="compositionally biased region" description="Basic and acidic residues" evidence="2">
    <location>
        <begin position="45"/>
        <end position="59"/>
    </location>
</feature>
<feature type="compositionally biased region" description="Low complexity" evidence="2">
    <location>
        <begin position="129"/>
        <end position="158"/>
    </location>
</feature>
<feature type="compositionally biased region" description="Low complexity" evidence="2">
    <location>
        <begin position="183"/>
        <end position="197"/>
    </location>
</feature>
<feature type="compositionally biased region" description="Low complexity" evidence="2">
    <location>
        <begin position="234"/>
        <end position="249"/>
    </location>
</feature>
<feature type="compositionally biased region" description="Low complexity" evidence="2">
    <location>
        <begin position="293"/>
        <end position="309"/>
    </location>
</feature>
<feature type="compositionally biased region" description="Low complexity" evidence="2">
    <location>
        <begin position="403"/>
        <end position="418"/>
    </location>
</feature>
<feature type="compositionally biased region" description="Low complexity" evidence="2">
    <location>
        <begin position="465"/>
        <end position="474"/>
    </location>
</feature>
<feature type="compositionally biased region" description="Low complexity" evidence="2">
    <location>
        <begin position="526"/>
        <end position="542"/>
    </location>
</feature>
<feature type="compositionally biased region" description="Low complexity" evidence="2">
    <location>
        <begin position="569"/>
        <end position="589"/>
    </location>
</feature>
<feature type="compositionally biased region" description="Basic and acidic residues" evidence="2">
    <location>
        <begin position="590"/>
        <end position="599"/>
    </location>
</feature>
<feature type="compositionally biased region" description="Low complexity" evidence="2">
    <location>
        <begin position="602"/>
        <end position="617"/>
    </location>
</feature>
<feature type="compositionally biased region" description="Gly residues" evidence="2">
    <location>
        <begin position="627"/>
        <end position="636"/>
    </location>
</feature>
<feature type="compositionally biased region" description="Low complexity" evidence="2">
    <location>
        <begin position="637"/>
        <end position="647"/>
    </location>
</feature>
<feature type="compositionally biased region" description="Low complexity" evidence="2">
    <location>
        <begin position="701"/>
        <end position="730"/>
    </location>
</feature>
<feature type="compositionally biased region" description="Low complexity" evidence="2">
    <location>
        <begin position="745"/>
        <end position="775"/>
    </location>
</feature>
<feature type="compositionally biased region" description="Low complexity" evidence="2">
    <location>
        <begin position="785"/>
        <end position="805"/>
    </location>
</feature>
<feature type="compositionally biased region" description="Basic and acidic residues" evidence="2">
    <location>
        <begin position="809"/>
        <end position="820"/>
    </location>
</feature>
<feature type="compositionally biased region" description="Pro residues" evidence="2">
    <location>
        <begin position="893"/>
        <end position="908"/>
    </location>
</feature>
<feature type="unsure residue" description="I or L" evidence="3">
    <location>
        <position position="5"/>
    </location>
</feature>
<feature type="unsure residue" description="I or L" evidence="3">
    <location>
        <position position="77"/>
    </location>
</feature>
<feature type="unsure residue" description="I or L" evidence="3">
    <location>
        <position position="83"/>
    </location>
</feature>
<feature type="unsure residue" description="I or L" evidence="3">
    <location>
        <position position="89"/>
    </location>
</feature>
<feature type="unsure residue" description="I or L" evidence="3">
    <location>
        <position position="92"/>
    </location>
</feature>
<feature type="unsure residue" description="I or L" evidence="3">
    <location>
        <position position="122"/>
    </location>
</feature>
<feature type="unsure residue" description="I or L" evidence="3">
    <location>
        <position position="153"/>
    </location>
</feature>
<feature type="unsure residue" description="I or L" evidence="3">
    <location>
        <position position="171"/>
    </location>
</feature>
<feature type="unsure residue" description="I or L" evidence="3">
    <location>
        <position position="191"/>
    </location>
</feature>
<feature type="unsure residue" description="I or L" evidence="3">
    <location>
        <position position="209"/>
    </location>
</feature>
<feature type="unsure residue" description="I or L" evidence="3">
    <location>
        <position position="218"/>
    </location>
</feature>
<feature type="unsure residue" description="I or L" evidence="3">
    <location>
        <position position="227"/>
    </location>
</feature>
<feature type="unsure residue" description="I or L" evidence="3">
    <location>
        <position position="233"/>
    </location>
</feature>
<feature type="unsure residue" description="I or L" evidence="3">
    <location>
        <position position="248"/>
    </location>
</feature>
<feature type="unsure residue" description="I or L" evidence="3">
    <location>
        <position position="302"/>
    </location>
</feature>
<feature type="unsure residue" description="I or L" evidence="3">
    <location>
        <position position="308"/>
    </location>
</feature>
<feature type="unsure residue" description="I or L" evidence="3">
    <location>
        <position position="336"/>
    </location>
</feature>
<feature type="unsure residue" description="I or L" evidence="3">
    <location>
        <position position="349"/>
    </location>
</feature>
<feature type="unsure residue" description="I or L" evidence="3">
    <location>
        <position position="360"/>
    </location>
</feature>
<feature type="unsure residue" description="I or L" evidence="3">
    <location>
        <position position="363"/>
    </location>
</feature>
<feature type="unsure residue" description="I or L" evidence="3">
    <location>
        <position position="382"/>
    </location>
</feature>
<feature type="unsure residue" description="I or L" evidence="3">
    <location>
        <position position="405"/>
    </location>
</feature>
<feature type="unsure residue" description="I or L" evidence="3">
    <location>
        <position position="420"/>
    </location>
</feature>
<feature type="unsure residue" description="I or L" evidence="3">
    <location>
        <position position="438"/>
    </location>
</feature>
<feature type="unsure residue" description="I or L" evidence="3">
    <location>
        <position position="444"/>
    </location>
</feature>
<feature type="unsure residue" description="I or L" evidence="3">
    <location>
        <position position="469"/>
    </location>
</feature>
<feature type="unsure residue" description="I or L" evidence="3">
    <location>
        <position position="490"/>
    </location>
</feature>
<feature type="unsure residue" description="I or L" evidence="3">
    <location>
        <position position="493"/>
    </location>
</feature>
<feature type="unsure residue" description="I or L" evidence="3">
    <location>
        <position position="504"/>
    </location>
</feature>
<feature type="unsure residue" description="I or L" evidence="3">
    <location>
        <position position="513"/>
    </location>
</feature>
<feature type="unsure residue" description="I or L" evidence="3">
    <location>
        <position position="525"/>
    </location>
</feature>
<feature type="unsure residue" description="I or L" evidence="3">
    <location>
        <position position="533"/>
    </location>
</feature>
<feature type="unsure residue" description="I or L" evidence="3">
    <location>
        <position position="655"/>
    </location>
</feature>
<feature type="unsure residue" description="I or L" evidence="3">
    <location>
        <position position="670"/>
    </location>
</feature>
<feature type="unsure residue" description="I or L" evidence="3">
    <location>
        <position position="691"/>
    </location>
</feature>
<feature type="unsure residue" description="I or L" evidence="3">
    <location>
        <position position="709"/>
    </location>
</feature>
<feature type="unsure residue" description="I or L" evidence="3">
    <location>
        <position position="718"/>
    </location>
</feature>
<feature type="unsure residue" description="I or L" evidence="3">
    <location>
        <position position="719"/>
    </location>
</feature>
<feature type="unsure residue" description="I or L" evidence="3">
    <location>
        <position position="724"/>
    </location>
</feature>
<feature type="unsure residue" description="I or L" evidence="3">
    <location>
        <position position="725"/>
    </location>
</feature>
<feature type="unsure residue" description="I or L" evidence="3">
    <location>
        <position position="727"/>
    </location>
</feature>
<feature type="unsure residue" description="I or L" evidence="3">
    <location>
        <position position="736"/>
    </location>
</feature>
<feature type="unsure residue" description="I or L" evidence="3">
    <location>
        <position position="743"/>
    </location>
</feature>
<feature type="unsure residue" description="I or L" evidence="3">
    <location>
        <position position="749"/>
    </location>
</feature>
<feature type="unsure residue" description="I or L" evidence="3">
    <location>
        <position position="751"/>
    </location>
</feature>
<feature type="unsure residue" description="I or L" evidence="3">
    <location>
        <position position="808"/>
    </location>
</feature>
<feature type="unsure residue" description="I or L" evidence="3">
    <location>
        <position position="823"/>
    </location>
</feature>
<feature type="unsure residue" description="I or L" evidence="3">
    <location>
        <position position="826"/>
    </location>
</feature>
<feature type="unsure residue" description="I or L" evidence="3">
    <location>
        <position position="832"/>
    </location>
</feature>
<feature type="unsure residue" description="I or L" evidence="3">
    <location>
        <position position="835"/>
    </location>
</feature>
<feature type="unsure residue" description="I or L" evidence="3">
    <location>
        <position position="838"/>
    </location>
</feature>
<feature type="unsure residue" description="I or L" evidence="3">
    <location>
        <position position="872"/>
    </location>
</feature>
<feature type="unsure residue" description="I or L" evidence="3">
    <location>
        <position position="883"/>
    </location>
</feature>
<feature type="non-consecutive residues" evidence="4">
    <location>
        <begin position="20"/>
        <end position="21"/>
    </location>
</feature>
<feature type="non-consecutive residues" evidence="4">
    <location>
        <begin position="304"/>
        <end position="305"/>
    </location>
</feature>
<feature type="non-consecutive residues" evidence="4">
    <location>
        <begin position="313"/>
        <end position="314"/>
    </location>
</feature>
<feature type="non-consecutive residues" evidence="4">
    <location>
        <begin position="326"/>
        <end position="327"/>
    </location>
</feature>
<feature type="non-consecutive residues" evidence="4">
    <location>
        <begin position="409"/>
        <end position="410"/>
    </location>
</feature>
<feature type="non-consecutive residues" evidence="4">
    <location>
        <begin position="526"/>
        <end position="527"/>
    </location>
</feature>
<feature type="non-consecutive residues" evidence="4">
    <location>
        <begin position="778"/>
        <end position="779"/>
    </location>
</feature>
<reference evidence="5" key="1">
    <citation type="journal article" date="2015" name="Nature">
        <title>Ancient proteins resolve the evolutionary history of Darwin's South American ungulates.</title>
        <authorList>
            <person name="Welker F."/>
            <person name="Collins M.J."/>
            <person name="Thomas J.A."/>
            <person name="Wadsley M."/>
            <person name="Brace S."/>
            <person name="Cappellini E."/>
            <person name="Turvey S.T."/>
            <person name="Reguero M."/>
            <person name="Gelfo J.N."/>
            <person name="Kramarz A."/>
            <person name="Burger J."/>
            <person name="Thomas-Oates J."/>
            <person name="Ashford D.A."/>
            <person name="Ashton P.D."/>
            <person name="Rowsell K."/>
            <person name="Porter D.M."/>
            <person name="Kessler B."/>
            <person name="Fischer R."/>
            <person name="Baessmann C."/>
            <person name="Kaspar S."/>
            <person name="Olsen J.V."/>
            <person name="Kiley P."/>
            <person name="Elliott J.A."/>
            <person name="Kelstrup C.D."/>
            <person name="Mullin V."/>
            <person name="Hofreiter M."/>
            <person name="Willerslev E."/>
            <person name="Hublin J.J."/>
            <person name="Orlando L."/>
            <person name="Barnes I."/>
            <person name="MacPhee R.D."/>
        </authorList>
    </citation>
    <scope>PROTEIN SEQUENCE</scope>
    <scope>IDENTIFICATION BY MASS SPECTROMETRY</scope>
    <source>
        <tissue evidence="4">Bone</tissue>
    </source>
</reference>
<sequence>GPMGIMGPRGPPGASGAPGPAGEPGEPGQTGPAGARGPPGPPGKAGEDGHPGKPGRPGERGVVGPQGARGFPGTPGIPGFKGIRGHNGIDGIKGQPGAPGVKGEPGAPGENGTPGQAGARGIPGERGRVGAPGPAGARGSDGSVGPVGPAGPIGSAGPPGFPGAPGPKGEIGPVGNPGPAGPAGPRGEVGIPGVSGPVGPPGNPGANGITGAKGAAGIPGVAGAPGIPGPRGIPGPVGAAGATGARGIVGEPGPAGSKGESGNKGEPGSAGPQGPPGPAGEEGKRGPNGEAGSTGPTGPPGIRGSRGIPGADGGSRGATGPAGVRGDSGRPGEPGIMGPRGFPGSPGNIGPAGKEGPVGIPGIDGRPGPTGPAGARGEPGNIGFPGPKGPTGDPGKNGDKGHAGIAGARGPAGPPGFQGIPGPAGTAGEVGKPGERGIPGEFGIPGPAGARGERGPPGESGAVGPAGPIGSRGPSGPPGPDGNKGEPGNIGAIGTAGPSGPSGIPGERGAAGIPGGKGEKGETGIRRGAPGAIGAPGPAGANGDRGEAGPAGPAGPAGPRGSPGERGEVGPAGPNGFAGPAGAAGQPGAKGERGTKGPKGENGPVGPTGPVGAAGPAGPNGPPGPAGSRGDGGPPGATGFPGAAGRTGPPGPAGITGPPGPPGAAGKEGIRGPRGDQGPVGRSGETGASGIPGFAGEKGPAGEPGTAGIPGTPGPQGIIGAPGIIGIPGSRGERGIPGVAGSIGEPGPIGIAGPPGARGPPGAVGNPGVNGAPGEAGRHGNRGEPGPAGSVGPAGAVGPRGPSGPQGIRGDKGEPGDKGPRGIPGIKGHNGIQGIPGIAGQHGDQGAPGAVGPAGPRGPAGPSGPAGKDGRIGHPGTVGPAGIRGSQGSQGPAGPPGPPGPPGPPGPS</sequence>
<evidence type="ECO:0000250" key="1">
    <source>
        <dbReference type="UniProtKB" id="P08123"/>
    </source>
</evidence>
<evidence type="ECO:0000256" key="2">
    <source>
        <dbReference type="SAM" id="MobiDB-lite"/>
    </source>
</evidence>
<evidence type="ECO:0000269" key="3">
    <source>
    </source>
</evidence>
<evidence type="ECO:0000303" key="4">
    <source>
    </source>
</evidence>
<evidence type="ECO:0000305" key="5"/>
<evidence type="ECO:0000305" key="6">
    <source>
    </source>
</evidence>
<comment type="function">
    <text evidence="5">Type I collagen is a member of group I collagen (fibrillar forming collagen).</text>
</comment>
<comment type="subunit">
    <text evidence="1">Trimers of one alpha 2(I) and two alpha 1(I) chains. Interacts (via C-terminus) with TMEM131 (via PapD-L domain); the interaction is direct and is involved in assembly and TRAPPIII ER-to-Golgi transport complex-dependent secretion of collagen.</text>
</comment>
<comment type="subcellular location">
    <subcellularLocation>
        <location>Secreted</location>
    </subcellularLocation>
    <subcellularLocation>
        <location>Secreted</location>
        <location>Extracellular space</location>
    </subcellularLocation>
    <subcellularLocation>
        <location evidence="5">Secreted</location>
        <location evidence="5">Extracellular space</location>
        <location evidence="5">Extracellular matrix</location>
    </subcellularLocation>
</comment>
<comment type="tissue specificity">
    <text evidence="5">Forms the fibrils of tendon, ligaments and bones. In bones, the fibrils are mineralized with calcium hydroxyapatite.</text>
</comment>
<comment type="PTM">
    <text evidence="5">Prolines at the third position of the tripeptide repeating unit (G-X-Y) are hydroxylated in some or all of the chains.</text>
</comment>
<comment type="miscellaneous">
    <text evidence="6">These protein fragments were extracted from fossils. The tryptic peptides required multiple purification steps in order to eliminate contaminants and to increase the concentration of peptidic material.</text>
</comment>
<comment type="similarity">
    <text evidence="5">Belongs to the fibrillar collagen family.</text>
</comment>
<gene>
    <name evidence="1" type="primary">COL1A2</name>
</gene>
<name>CO1A2_TOXSP</name>
<accession>C0HJP8</accession>
<proteinExistence type="evidence at protein level"/>
<dbReference type="GO" id="GO:0005581">
    <property type="term" value="C:collagen trimer"/>
    <property type="evidence" value="ECO:0007669"/>
    <property type="project" value="UniProtKB-KW"/>
</dbReference>
<dbReference type="GO" id="GO:0031012">
    <property type="term" value="C:extracellular matrix"/>
    <property type="evidence" value="ECO:0007669"/>
    <property type="project" value="TreeGrafter"/>
</dbReference>
<dbReference type="GO" id="GO:0005615">
    <property type="term" value="C:extracellular space"/>
    <property type="evidence" value="ECO:0007669"/>
    <property type="project" value="TreeGrafter"/>
</dbReference>
<dbReference type="GO" id="GO:0030020">
    <property type="term" value="F:extracellular matrix structural constituent conferring tensile strength"/>
    <property type="evidence" value="ECO:0007669"/>
    <property type="project" value="TreeGrafter"/>
</dbReference>
<dbReference type="GO" id="GO:0030198">
    <property type="term" value="P:extracellular matrix organization"/>
    <property type="evidence" value="ECO:0007669"/>
    <property type="project" value="TreeGrafter"/>
</dbReference>
<dbReference type="InterPro" id="IPR008160">
    <property type="entry name" value="Collagen"/>
</dbReference>
<dbReference type="InterPro" id="IPR050149">
    <property type="entry name" value="Collagen_superfamily"/>
</dbReference>
<dbReference type="PANTHER" id="PTHR24023:SF1112">
    <property type="entry name" value="COL_CUTICLE_N DOMAIN-CONTAINING PROTEIN-RELATED"/>
    <property type="match status" value="1"/>
</dbReference>
<dbReference type="PANTHER" id="PTHR24023">
    <property type="entry name" value="COLLAGEN ALPHA"/>
    <property type="match status" value="1"/>
</dbReference>
<dbReference type="Pfam" id="PF01391">
    <property type="entry name" value="Collagen"/>
    <property type="match status" value="3"/>
</dbReference>
<keyword id="KW-0106">Calcium</keyword>
<keyword id="KW-0176">Collagen</keyword>
<keyword id="KW-0903">Direct protein sequencing</keyword>
<keyword id="KW-0952">Extinct organism protein</keyword>
<keyword id="KW-0272">Extracellular matrix</keyword>
<keyword id="KW-0379">Hydroxylation</keyword>
<keyword id="KW-0677">Repeat</keyword>
<keyword id="KW-0964">Secreted</keyword>
<organism evidence="4">
    <name type="scientific">Toxodon sp</name>
    <dbReference type="NCBI Taxonomy" id="1563122"/>
    <lineage>
        <taxon>Eukaryota</taxon>
        <taxon>Metazoa</taxon>
        <taxon>Chordata</taxon>
        <taxon>Craniata</taxon>
        <taxon>Vertebrata</taxon>
        <taxon>Euteleostomi</taxon>
        <taxon>Mammalia</taxon>
        <taxon>Eutheria</taxon>
        <taxon>Notoungulata</taxon>
        <taxon>Toxodontidae</taxon>
        <taxon>Toxodon</taxon>
    </lineage>
</organism>
<protein>
    <recommendedName>
        <fullName evidence="4">Collagen alpha-2(I) chain</fullName>
    </recommendedName>
    <alternativeName>
        <fullName evidence="1">Alpha-2 type I collagen</fullName>
    </alternativeName>
</protein>